<proteinExistence type="inferred from homology"/>
<organism>
    <name type="scientific">Escherichia coli (strain 55989 / EAEC)</name>
    <dbReference type="NCBI Taxonomy" id="585055"/>
    <lineage>
        <taxon>Bacteria</taxon>
        <taxon>Pseudomonadati</taxon>
        <taxon>Pseudomonadota</taxon>
        <taxon>Gammaproteobacteria</taxon>
        <taxon>Enterobacterales</taxon>
        <taxon>Enterobacteriaceae</taxon>
        <taxon>Escherichia</taxon>
    </lineage>
</organism>
<sequence length="296" mass="33112">MTKVGLRIDVDTFRGTREGVPRLLEILSKHNIQASIFFSVGPDNMGRHLWRLVKPQFLWKMLRSNAASLYGWDILLAGTAWPGKEIGHANADIIREAAKHHEVGLHAWDHHAWQARSGNWDRQTMIDDIARGLRTLEEIIGQPVTCSAAAGWRADQQVIEAKEAFHLRYNSDCRGAMPFRPLLESGNPGTAQIPVTLPTWDEVIGRDVKAEDFNGWLLNRILRDKGTPVYTIHAEVEGCAYQHNFVDLLKRAAQEGVTFCPLSELLSETLPLGQVVRGNIAGREGWLGCQQIAGSR</sequence>
<keyword id="KW-0046">Antibiotic resistance</keyword>
<keyword id="KW-0378">Hydrolase</keyword>
<keyword id="KW-0441">Lipid A biosynthesis</keyword>
<keyword id="KW-0444">Lipid biosynthesis</keyword>
<keyword id="KW-0443">Lipid metabolism</keyword>
<keyword id="KW-0448">Lipopolysaccharide biosynthesis</keyword>
<keyword id="KW-1185">Reference proteome</keyword>
<reference key="1">
    <citation type="journal article" date="2009" name="PLoS Genet.">
        <title>Organised genome dynamics in the Escherichia coli species results in highly diverse adaptive paths.</title>
        <authorList>
            <person name="Touchon M."/>
            <person name="Hoede C."/>
            <person name="Tenaillon O."/>
            <person name="Barbe V."/>
            <person name="Baeriswyl S."/>
            <person name="Bidet P."/>
            <person name="Bingen E."/>
            <person name="Bonacorsi S."/>
            <person name="Bouchier C."/>
            <person name="Bouvet O."/>
            <person name="Calteau A."/>
            <person name="Chiapello H."/>
            <person name="Clermont O."/>
            <person name="Cruveiller S."/>
            <person name="Danchin A."/>
            <person name="Diard M."/>
            <person name="Dossat C."/>
            <person name="Karoui M.E."/>
            <person name="Frapy E."/>
            <person name="Garry L."/>
            <person name="Ghigo J.M."/>
            <person name="Gilles A.M."/>
            <person name="Johnson J."/>
            <person name="Le Bouguenec C."/>
            <person name="Lescat M."/>
            <person name="Mangenot S."/>
            <person name="Martinez-Jehanne V."/>
            <person name="Matic I."/>
            <person name="Nassif X."/>
            <person name="Oztas S."/>
            <person name="Petit M.A."/>
            <person name="Pichon C."/>
            <person name="Rouy Z."/>
            <person name="Ruf C.S."/>
            <person name="Schneider D."/>
            <person name="Tourret J."/>
            <person name="Vacherie B."/>
            <person name="Vallenet D."/>
            <person name="Medigue C."/>
            <person name="Rocha E.P.C."/>
            <person name="Denamur E."/>
        </authorList>
    </citation>
    <scope>NUCLEOTIDE SEQUENCE [LARGE SCALE GENOMIC DNA]</scope>
    <source>
        <strain>55989 / EAEC</strain>
    </source>
</reference>
<feature type="chain" id="PRO_0000383495" description="Probable 4-deoxy-4-formamido-L-arabinose-phosphoundecaprenol deformylase ArnD">
    <location>
        <begin position="1"/>
        <end position="296"/>
    </location>
</feature>
<feature type="domain" description="NodB homology" evidence="1">
    <location>
        <begin position="2"/>
        <end position="260"/>
    </location>
</feature>
<accession>B7LAS1</accession>
<gene>
    <name evidence="1" type="primary">arnD</name>
    <name type="ordered locus">EC55989_2502</name>
</gene>
<name>ARND_ECO55</name>
<comment type="function">
    <text evidence="1">Catalyzes the deformylation of 4-deoxy-4-formamido-L-arabinose-phosphoundecaprenol to 4-amino-4-deoxy-L-arabinose-phosphoundecaprenol. The modified arabinose is attached to lipid A and is required for resistance to polymyxin and cationic antimicrobial peptides.</text>
</comment>
<comment type="catalytic activity">
    <reaction evidence="1">
        <text>4-deoxy-4-formamido-alpha-L-arabinopyranosyl di-trans,octa-cis-undecaprenyl phosphate + H2O = 4-amino-4-deoxy-alpha-L-arabinopyranosyl di-trans,octa-cis-undecaprenyl phosphate + formate</text>
        <dbReference type="Rhea" id="RHEA:27734"/>
        <dbReference type="ChEBI" id="CHEBI:15377"/>
        <dbReference type="ChEBI" id="CHEBI:15740"/>
        <dbReference type="ChEBI" id="CHEBI:58909"/>
        <dbReference type="ChEBI" id="CHEBI:60463"/>
        <dbReference type="EC" id="3.5.1.n3"/>
    </reaction>
</comment>
<comment type="pathway">
    <text evidence="1">Glycolipid biosynthesis; 4-amino-4-deoxy-alpha-L-arabinose undecaprenyl phosphate biosynthesis; 4-amino-4-deoxy-alpha-L-arabinose undecaprenyl phosphate from UDP-4-deoxy-4-formamido-beta-L-arabinose and undecaprenyl phosphate: step 2/2.</text>
</comment>
<comment type="pathway">
    <text evidence="1">Bacterial outer membrane biogenesis; lipopolysaccharide biosynthesis.</text>
</comment>
<comment type="similarity">
    <text evidence="1">Belongs to the polysaccharide deacetylase family. ArnD deformylase subfamily.</text>
</comment>
<protein>
    <recommendedName>
        <fullName evidence="1">Probable 4-deoxy-4-formamido-L-arabinose-phosphoundecaprenol deformylase ArnD</fullName>
        <ecNumber evidence="1">3.5.1.n3</ecNumber>
    </recommendedName>
</protein>
<evidence type="ECO:0000255" key="1">
    <source>
        <dbReference type="HAMAP-Rule" id="MF_01870"/>
    </source>
</evidence>
<dbReference type="EC" id="3.5.1.n3" evidence="1"/>
<dbReference type="EMBL" id="CU928145">
    <property type="protein sequence ID" value="CAU98371.1"/>
    <property type="molecule type" value="Genomic_DNA"/>
</dbReference>
<dbReference type="RefSeq" id="WP_000169737.1">
    <property type="nucleotide sequence ID" value="NC_011748.1"/>
</dbReference>
<dbReference type="SMR" id="B7LAS1"/>
<dbReference type="GeneID" id="75172387"/>
<dbReference type="KEGG" id="eck:EC55989_2502"/>
<dbReference type="HOGENOM" id="CLU_084199_0_0_6"/>
<dbReference type="UniPathway" id="UPA00030"/>
<dbReference type="UniPathway" id="UPA00036">
    <property type="reaction ID" value="UER00496"/>
</dbReference>
<dbReference type="Proteomes" id="UP000000746">
    <property type="component" value="Chromosome"/>
</dbReference>
<dbReference type="GO" id="GO:0016020">
    <property type="term" value="C:membrane"/>
    <property type="evidence" value="ECO:0007669"/>
    <property type="project" value="GOC"/>
</dbReference>
<dbReference type="GO" id="GO:0016811">
    <property type="term" value="F:hydrolase activity, acting on carbon-nitrogen (but not peptide) bonds, in linear amides"/>
    <property type="evidence" value="ECO:0007669"/>
    <property type="project" value="UniProtKB-UniRule"/>
</dbReference>
<dbReference type="GO" id="GO:0036108">
    <property type="term" value="P:4-amino-4-deoxy-alpha-L-arabinopyranosyl undecaprenyl phosphate biosynthetic process"/>
    <property type="evidence" value="ECO:0007669"/>
    <property type="project" value="UniProtKB-UniRule"/>
</dbReference>
<dbReference type="GO" id="GO:0009245">
    <property type="term" value="P:lipid A biosynthetic process"/>
    <property type="evidence" value="ECO:0007669"/>
    <property type="project" value="UniProtKB-UniRule"/>
</dbReference>
<dbReference type="GO" id="GO:0009103">
    <property type="term" value="P:lipopolysaccharide biosynthetic process"/>
    <property type="evidence" value="ECO:0007669"/>
    <property type="project" value="UniProtKB-UniRule"/>
</dbReference>
<dbReference type="GO" id="GO:0046677">
    <property type="term" value="P:response to antibiotic"/>
    <property type="evidence" value="ECO:0007669"/>
    <property type="project" value="UniProtKB-KW"/>
</dbReference>
<dbReference type="CDD" id="cd10939">
    <property type="entry name" value="CE4_ArnD"/>
    <property type="match status" value="1"/>
</dbReference>
<dbReference type="Gene3D" id="3.20.20.370">
    <property type="entry name" value="Glycoside hydrolase/deacetylase"/>
    <property type="match status" value="1"/>
</dbReference>
<dbReference type="HAMAP" id="MF_01870">
    <property type="entry name" value="ArnD"/>
    <property type="match status" value="1"/>
</dbReference>
<dbReference type="InterPro" id="IPR023557">
    <property type="entry name" value="ArnD"/>
</dbReference>
<dbReference type="InterPro" id="IPR011330">
    <property type="entry name" value="Glyco_hydro/deAcase_b/a-brl"/>
</dbReference>
<dbReference type="InterPro" id="IPR002509">
    <property type="entry name" value="NODB_dom"/>
</dbReference>
<dbReference type="InterPro" id="IPR050248">
    <property type="entry name" value="Polysacc_deacetylase_ArnD"/>
</dbReference>
<dbReference type="NCBIfam" id="NF011923">
    <property type="entry name" value="PRK15394.1"/>
    <property type="match status" value="1"/>
</dbReference>
<dbReference type="PANTHER" id="PTHR10587:SF137">
    <property type="entry name" value="4-DEOXY-4-FORMAMIDO-L-ARABINOSE-PHOSPHOUNDECAPRENOL DEFORMYLASE ARND-RELATED"/>
    <property type="match status" value="1"/>
</dbReference>
<dbReference type="PANTHER" id="PTHR10587">
    <property type="entry name" value="GLYCOSYL TRANSFERASE-RELATED"/>
    <property type="match status" value="1"/>
</dbReference>
<dbReference type="Pfam" id="PF01522">
    <property type="entry name" value="Polysacc_deac_1"/>
    <property type="match status" value="1"/>
</dbReference>
<dbReference type="SUPFAM" id="SSF88713">
    <property type="entry name" value="Glycoside hydrolase/deacetylase"/>
    <property type="match status" value="1"/>
</dbReference>
<dbReference type="PROSITE" id="PS51677">
    <property type="entry name" value="NODB"/>
    <property type="match status" value="1"/>
</dbReference>